<proteinExistence type="inferred from homology"/>
<sequence length="901" mass="101965">MLIKLLTKVFGSRNDRTLRRMRKVVNIINAMEPEMEKLSDEELKGKTAEFRARLEKGEVLENLIPEAFAVVREASKRVFGMRHFDVQLLGGMVLNERCIAEMRTGEGKTLTATLPAYLNALTGKGVHVVTVNDYLAQRDAENNRPLFEFLGLTVGINLPGMPAPAKREAYAADITYGTNNEYGFDYLRDNMAFSPEERVQRKLHYALVDEVDSILIDEARTPLIISGPAEDSSEMYKRVNKIIPHLIRQEKEDSETFQGEGHFSVDEKSRQVNLTERGLVLIEELLVKEGIMDEGESLYSPANIMLMHHVTAALRAHALFTRDVDYIVKDGEVIIVDEHTGRTMQGRRWSDGLHQAVEAKEGVQIQNENQTLASITFQNYFRLYEKLAGMTGTADTEAFEFSSIYKLDTVVVPTNRPMIRKDLPDLVYMTEAEKIQAIIEDIKERTAKGQPVLVGTISIEKSELVSNELTKAGIKHNVLNAKFHANEAAIVAQAGYPAAVTIATNMAGRGTDIVLGGSWQAEVAALENPTAEQIEKIKADWQVRHDAVLAAGGLHIIGTERHESRRIDNQLRGRSGRQGDAGSSRFYLSMEDALMRIFASDRVSGMMRKLGMKPGEAIEHPWVTKAIANAQRKVESRNFDIRKQLLEYDDVANDQRRAIYSQRNELLDVSDVSETINSIREDVFKATIDAYIPPQSLEEMWDIPGLQERLKNDFDLDLPIAEWLDKEPELHEETLRERILAQSIEVYQRKEEVVGAEMMRHFEKGVMLQTLDSLWKEHLAAMDYLRQGIHLRGYAQKDPKQEYKRESFSMFAAMLESLKYEVISTLSKVQVRMPEEVEELEQQRRMEAERLAQMQQLSHQDDDSAAAAALAAQTGERKVGRNDPCPCGSGKKYKQCHGRLQ</sequence>
<gene>
    <name evidence="1" type="primary">secA</name>
    <name type="ordered locus">ECH74115_0106</name>
</gene>
<comment type="function">
    <text evidence="1">Part of the Sec protein translocase complex. Interacts with the SecYEG preprotein conducting channel. Has a central role in coupling the hydrolysis of ATP to the transfer of proteins into and across the cell membrane, serving both as a receptor for the preprotein-SecB complex and as an ATP-driven molecular motor driving the stepwise translocation of polypeptide chains across the membrane.</text>
</comment>
<comment type="catalytic activity">
    <reaction evidence="1">
        <text>ATP + H2O + cellular proteinSide 1 = ADP + phosphate + cellular proteinSide 2.</text>
        <dbReference type="EC" id="7.4.2.8"/>
    </reaction>
</comment>
<comment type="cofactor">
    <cofactor evidence="1">
        <name>Zn(2+)</name>
        <dbReference type="ChEBI" id="CHEBI:29105"/>
    </cofactor>
    <text evidence="1">May bind 1 zinc ion per subunit.</text>
</comment>
<comment type="subunit">
    <text evidence="1">Monomer and homodimer. Part of the essential Sec protein translocation apparatus which comprises SecA, SecYEG and auxiliary proteins SecDF-YajC and YidC.</text>
</comment>
<comment type="subcellular location">
    <subcellularLocation>
        <location evidence="1">Cell inner membrane</location>
        <topology evidence="1">Peripheral membrane protein</topology>
        <orientation evidence="1">Cytoplasmic side</orientation>
    </subcellularLocation>
    <subcellularLocation>
        <location evidence="1">Cytoplasm</location>
    </subcellularLocation>
    <text evidence="1">Distribution is 50-50.</text>
</comment>
<comment type="induction">
    <text evidence="1">Repressed under conditions of excess protein secretion capacity and derepressed when protein secretion becomes limiting. This is regulated by SecM.</text>
</comment>
<comment type="similarity">
    <text evidence="1">Belongs to the SecA family.</text>
</comment>
<evidence type="ECO:0000255" key="1">
    <source>
        <dbReference type="HAMAP-Rule" id="MF_01382"/>
    </source>
</evidence>
<evidence type="ECO:0000256" key="2">
    <source>
        <dbReference type="SAM" id="MobiDB-lite"/>
    </source>
</evidence>
<protein>
    <recommendedName>
        <fullName evidence="1">Protein translocase subunit SecA</fullName>
        <ecNumber evidence="1">7.4.2.8</ecNumber>
    </recommendedName>
</protein>
<keyword id="KW-0067">ATP-binding</keyword>
<keyword id="KW-0997">Cell inner membrane</keyword>
<keyword id="KW-1003">Cell membrane</keyword>
<keyword id="KW-0963">Cytoplasm</keyword>
<keyword id="KW-0472">Membrane</keyword>
<keyword id="KW-0479">Metal-binding</keyword>
<keyword id="KW-0547">Nucleotide-binding</keyword>
<keyword id="KW-0653">Protein transport</keyword>
<keyword id="KW-1278">Translocase</keyword>
<keyword id="KW-0811">Translocation</keyword>
<keyword id="KW-0813">Transport</keyword>
<keyword id="KW-0862">Zinc</keyword>
<feature type="chain" id="PRO_1000145006" description="Protein translocase subunit SecA">
    <location>
        <begin position="1"/>
        <end position="901"/>
    </location>
</feature>
<feature type="region of interest" description="Disordered" evidence="2">
    <location>
        <begin position="859"/>
        <end position="901"/>
    </location>
</feature>
<feature type="compositionally biased region" description="Basic residues" evidence="2">
    <location>
        <begin position="891"/>
        <end position="901"/>
    </location>
</feature>
<feature type="binding site" evidence="1">
    <location>
        <position position="87"/>
    </location>
    <ligand>
        <name>ATP</name>
        <dbReference type="ChEBI" id="CHEBI:30616"/>
    </ligand>
</feature>
<feature type="binding site" evidence="1">
    <location>
        <begin position="105"/>
        <end position="109"/>
    </location>
    <ligand>
        <name>ATP</name>
        <dbReference type="ChEBI" id="CHEBI:30616"/>
    </ligand>
</feature>
<feature type="binding site" evidence="1">
    <location>
        <position position="512"/>
    </location>
    <ligand>
        <name>ATP</name>
        <dbReference type="ChEBI" id="CHEBI:30616"/>
    </ligand>
</feature>
<feature type="binding site" evidence="1">
    <location>
        <position position="885"/>
    </location>
    <ligand>
        <name>Zn(2+)</name>
        <dbReference type="ChEBI" id="CHEBI:29105"/>
    </ligand>
</feature>
<feature type="binding site" evidence="1">
    <location>
        <position position="887"/>
    </location>
    <ligand>
        <name>Zn(2+)</name>
        <dbReference type="ChEBI" id="CHEBI:29105"/>
    </ligand>
</feature>
<feature type="binding site" evidence="1">
    <location>
        <position position="896"/>
    </location>
    <ligand>
        <name>Zn(2+)</name>
        <dbReference type="ChEBI" id="CHEBI:29105"/>
    </ligand>
</feature>
<feature type="binding site" evidence="1">
    <location>
        <position position="897"/>
    </location>
    <ligand>
        <name>Zn(2+)</name>
        <dbReference type="ChEBI" id="CHEBI:29105"/>
    </ligand>
</feature>
<dbReference type="EC" id="7.4.2.8" evidence="1"/>
<dbReference type="EMBL" id="CP001164">
    <property type="protein sequence ID" value="ACI38050.1"/>
    <property type="molecule type" value="Genomic_DNA"/>
</dbReference>
<dbReference type="RefSeq" id="WP_000905780.1">
    <property type="nucleotide sequence ID" value="NC_011353.1"/>
</dbReference>
<dbReference type="SMR" id="B5YZD4"/>
<dbReference type="KEGG" id="ecf:ECH74115_0106"/>
<dbReference type="HOGENOM" id="CLU_005314_3_0_6"/>
<dbReference type="GO" id="GO:0031522">
    <property type="term" value="C:cell envelope Sec protein transport complex"/>
    <property type="evidence" value="ECO:0007669"/>
    <property type="project" value="TreeGrafter"/>
</dbReference>
<dbReference type="GO" id="GO:0005829">
    <property type="term" value="C:cytosol"/>
    <property type="evidence" value="ECO:0007669"/>
    <property type="project" value="TreeGrafter"/>
</dbReference>
<dbReference type="GO" id="GO:0005886">
    <property type="term" value="C:plasma membrane"/>
    <property type="evidence" value="ECO:0007669"/>
    <property type="project" value="UniProtKB-SubCell"/>
</dbReference>
<dbReference type="GO" id="GO:0005524">
    <property type="term" value="F:ATP binding"/>
    <property type="evidence" value="ECO:0007669"/>
    <property type="project" value="UniProtKB-UniRule"/>
</dbReference>
<dbReference type="GO" id="GO:0046872">
    <property type="term" value="F:metal ion binding"/>
    <property type="evidence" value="ECO:0007669"/>
    <property type="project" value="UniProtKB-KW"/>
</dbReference>
<dbReference type="GO" id="GO:0008564">
    <property type="term" value="F:protein-exporting ATPase activity"/>
    <property type="evidence" value="ECO:0007669"/>
    <property type="project" value="UniProtKB-EC"/>
</dbReference>
<dbReference type="GO" id="GO:0065002">
    <property type="term" value="P:intracellular protein transmembrane transport"/>
    <property type="evidence" value="ECO:0007669"/>
    <property type="project" value="UniProtKB-UniRule"/>
</dbReference>
<dbReference type="GO" id="GO:0017038">
    <property type="term" value="P:protein import"/>
    <property type="evidence" value="ECO:0007669"/>
    <property type="project" value="InterPro"/>
</dbReference>
<dbReference type="GO" id="GO:0006605">
    <property type="term" value="P:protein targeting"/>
    <property type="evidence" value="ECO:0007669"/>
    <property type="project" value="UniProtKB-UniRule"/>
</dbReference>
<dbReference type="GO" id="GO:0043952">
    <property type="term" value="P:protein transport by the Sec complex"/>
    <property type="evidence" value="ECO:0007669"/>
    <property type="project" value="TreeGrafter"/>
</dbReference>
<dbReference type="CDD" id="cd17928">
    <property type="entry name" value="DEXDc_SecA"/>
    <property type="match status" value="1"/>
</dbReference>
<dbReference type="CDD" id="cd18803">
    <property type="entry name" value="SF2_C_secA"/>
    <property type="match status" value="1"/>
</dbReference>
<dbReference type="FunFam" id="1.10.3060.10:FF:000001">
    <property type="entry name" value="Preprotein translocase subunit SecA"/>
    <property type="match status" value="1"/>
</dbReference>
<dbReference type="FunFam" id="3.40.50.300:FF:000081">
    <property type="entry name" value="Preprotein translocase subunit SecA"/>
    <property type="match status" value="1"/>
</dbReference>
<dbReference type="FunFam" id="3.40.50.300:FF:000113">
    <property type="entry name" value="Preprotein translocase subunit SecA"/>
    <property type="match status" value="1"/>
</dbReference>
<dbReference type="FunFam" id="3.90.1440.10:FF:000001">
    <property type="entry name" value="Preprotein translocase subunit SecA"/>
    <property type="match status" value="1"/>
</dbReference>
<dbReference type="Gene3D" id="1.10.3060.10">
    <property type="entry name" value="Helical scaffold and wing domains of SecA"/>
    <property type="match status" value="1"/>
</dbReference>
<dbReference type="Gene3D" id="3.40.50.300">
    <property type="entry name" value="P-loop containing nucleotide triphosphate hydrolases"/>
    <property type="match status" value="2"/>
</dbReference>
<dbReference type="Gene3D" id="3.90.1440.10">
    <property type="entry name" value="SecA, preprotein cross-linking domain"/>
    <property type="match status" value="1"/>
</dbReference>
<dbReference type="HAMAP" id="MF_01382">
    <property type="entry name" value="SecA"/>
    <property type="match status" value="1"/>
</dbReference>
<dbReference type="InterPro" id="IPR014001">
    <property type="entry name" value="Helicase_ATP-bd"/>
</dbReference>
<dbReference type="InterPro" id="IPR001650">
    <property type="entry name" value="Helicase_C-like"/>
</dbReference>
<dbReference type="InterPro" id="IPR027417">
    <property type="entry name" value="P-loop_NTPase"/>
</dbReference>
<dbReference type="InterPro" id="IPR004027">
    <property type="entry name" value="SEC_C_motif"/>
</dbReference>
<dbReference type="InterPro" id="IPR000185">
    <property type="entry name" value="SecA"/>
</dbReference>
<dbReference type="InterPro" id="IPR020937">
    <property type="entry name" value="SecA_CS"/>
</dbReference>
<dbReference type="InterPro" id="IPR011115">
    <property type="entry name" value="SecA_DEAD"/>
</dbReference>
<dbReference type="InterPro" id="IPR014018">
    <property type="entry name" value="SecA_motor_DEAD"/>
</dbReference>
<dbReference type="InterPro" id="IPR011130">
    <property type="entry name" value="SecA_preprotein_X-link_dom"/>
</dbReference>
<dbReference type="InterPro" id="IPR044722">
    <property type="entry name" value="SecA_SF2_C"/>
</dbReference>
<dbReference type="InterPro" id="IPR011116">
    <property type="entry name" value="SecA_Wing/Scaffold"/>
</dbReference>
<dbReference type="InterPro" id="IPR036266">
    <property type="entry name" value="SecA_Wing/Scaffold_sf"/>
</dbReference>
<dbReference type="InterPro" id="IPR036670">
    <property type="entry name" value="SecA_X-link_sf"/>
</dbReference>
<dbReference type="NCBIfam" id="NF009538">
    <property type="entry name" value="PRK12904.1"/>
    <property type="match status" value="1"/>
</dbReference>
<dbReference type="NCBIfam" id="TIGR00963">
    <property type="entry name" value="secA"/>
    <property type="match status" value="1"/>
</dbReference>
<dbReference type="PANTHER" id="PTHR30612:SF0">
    <property type="entry name" value="CHLOROPLAST PROTEIN-TRANSPORTING ATPASE"/>
    <property type="match status" value="1"/>
</dbReference>
<dbReference type="PANTHER" id="PTHR30612">
    <property type="entry name" value="SECA INNER MEMBRANE COMPONENT OF SEC PROTEIN SECRETION SYSTEM"/>
    <property type="match status" value="1"/>
</dbReference>
<dbReference type="Pfam" id="PF21090">
    <property type="entry name" value="P-loop_SecA"/>
    <property type="match status" value="1"/>
</dbReference>
<dbReference type="Pfam" id="PF02810">
    <property type="entry name" value="SEC-C"/>
    <property type="match status" value="1"/>
</dbReference>
<dbReference type="Pfam" id="PF07517">
    <property type="entry name" value="SecA_DEAD"/>
    <property type="match status" value="1"/>
</dbReference>
<dbReference type="Pfam" id="PF01043">
    <property type="entry name" value="SecA_PP_bind"/>
    <property type="match status" value="1"/>
</dbReference>
<dbReference type="Pfam" id="PF07516">
    <property type="entry name" value="SecA_SW"/>
    <property type="match status" value="1"/>
</dbReference>
<dbReference type="PRINTS" id="PR00906">
    <property type="entry name" value="SECA"/>
</dbReference>
<dbReference type="SMART" id="SM00957">
    <property type="entry name" value="SecA_DEAD"/>
    <property type="match status" value="1"/>
</dbReference>
<dbReference type="SMART" id="SM00958">
    <property type="entry name" value="SecA_PP_bind"/>
    <property type="match status" value="1"/>
</dbReference>
<dbReference type="SUPFAM" id="SSF81886">
    <property type="entry name" value="Helical scaffold and wing domains of SecA"/>
    <property type="match status" value="1"/>
</dbReference>
<dbReference type="SUPFAM" id="SSF52540">
    <property type="entry name" value="P-loop containing nucleoside triphosphate hydrolases"/>
    <property type="match status" value="2"/>
</dbReference>
<dbReference type="SUPFAM" id="SSF81767">
    <property type="entry name" value="Pre-protein crosslinking domain of SecA"/>
    <property type="match status" value="1"/>
</dbReference>
<dbReference type="PROSITE" id="PS01312">
    <property type="entry name" value="SECA"/>
    <property type="match status" value="1"/>
</dbReference>
<dbReference type="PROSITE" id="PS51196">
    <property type="entry name" value="SECA_MOTOR_DEAD"/>
    <property type="match status" value="1"/>
</dbReference>
<accession>B5YZD4</accession>
<reference key="1">
    <citation type="journal article" date="2011" name="Proc. Natl. Acad. Sci. U.S.A.">
        <title>Genomic anatomy of Escherichia coli O157:H7 outbreaks.</title>
        <authorList>
            <person name="Eppinger M."/>
            <person name="Mammel M.K."/>
            <person name="Leclerc J.E."/>
            <person name="Ravel J."/>
            <person name="Cebula T.A."/>
        </authorList>
    </citation>
    <scope>NUCLEOTIDE SEQUENCE [LARGE SCALE GENOMIC DNA]</scope>
    <source>
        <strain>EC4115 / EHEC</strain>
    </source>
</reference>
<name>SECA_ECO5E</name>
<organism>
    <name type="scientific">Escherichia coli O157:H7 (strain EC4115 / EHEC)</name>
    <dbReference type="NCBI Taxonomy" id="444450"/>
    <lineage>
        <taxon>Bacteria</taxon>
        <taxon>Pseudomonadati</taxon>
        <taxon>Pseudomonadota</taxon>
        <taxon>Gammaproteobacteria</taxon>
        <taxon>Enterobacterales</taxon>
        <taxon>Enterobacteriaceae</taxon>
        <taxon>Escherichia</taxon>
    </lineage>
</organism>